<name>YO325_YEAST</name>
<gene>
    <name type="ordered locus">YOR325W</name>
    <name type="ORF">06163</name>
</gene>
<evidence type="ECO:0000305" key="1"/>
<evidence type="ECO:0000305" key="2">
    <source>
    </source>
</evidence>
<sequence length="157" mass="16877">MSSSNKKSLNFPVLVDPRTGKLVISNERCRTPCALFFVTYKCLLSCSAGCSSFSFSLSFCNNDPKFTSVLGLGTTGLSFTAMTGNLEDDFEKCATFVLACRGSGCGCGCRPDSFIFTASPLEALLPLQKPLGNEGGNRVQFLDPGFSIRSISKFIFT</sequence>
<comment type="miscellaneous">
    <text evidence="1">Partially overlaps small nucleolar RNA U3 (SNR17B).</text>
</comment>
<comment type="caution">
    <text evidence="2">Product of a dubious gene prediction unlikely to encode a functional protein. Because of that it is not part of the S.cerevisiae S288c complete/reference proteome set.</text>
</comment>
<protein>
    <recommendedName>
        <fullName>Putative uncharacterized protein YOR325W</fullName>
    </recommendedName>
</protein>
<accession>Q12261</accession>
<reference key="1">
    <citation type="journal article" date="1996" name="Yeast">
        <title>Sequencing of a 35.71 kb DNA segment on the right arm of yeast chromosome XV reveals regions of similarity to chromosomes I and XIII.</title>
        <authorList>
            <person name="Pearson B.M."/>
            <person name="Hernando Y."/>
            <person name="Payne J."/>
            <person name="Wolf S.S."/>
            <person name="Kalogeropoulos A."/>
            <person name="Schweizer M."/>
        </authorList>
    </citation>
    <scope>NUCLEOTIDE SEQUENCE [GENOMIC DNA]</scope>
    <source>
        <strain>ATCC 96604 / S288c / FY1679</strain>
    </source>
</reference>
<reference key="2">
    <citation type="journal article" date="1997" name="Nature">
        <title>The nucleotide sequence of Saccharomyces cerevisiae chromosome XV.</title>
        <authorList>
            <person name="Dujon B."/>
            <person name="Albermann K."/>
            <person name="Aldea M."/>
            <person name="Alexandraki D."/>
            <person name="Ansorge W."/>
            <person name="Arino J."/>
            <person name="Benes V."/>
            <person name="Bohn C."/>
            <person name="Bolotin-Fukuhara M."/>
            <person name="Bordonne R."/>
            <person name="Boyer J."/>
            <person name="Camasses A."/>
            <person name="Casamayor A."/>
            <person name="Casas C."/>
            <person name="Cheret G."/>
            <person name="Cziepluch C."/>
            <person name="Daignan-Fornier B."/>
            <person name="Dang V.-D."/>
            <person name="de Haan M."/>
            <person name="Delius H."/>
            <person name="Durand P."/>
            <person name="Fairhead C."/>
            <person name="Feldmann H."/>
            <person name="Gaillon L."/>
            <person name="Galisson F."/>
            <person name="Gamo F.-J."/>
            <person name="Gancedo C."/>
            <person name="Goffeau A."/>
            <person name="Goulding S.E."/>
            <person name="Grivell L.A."/>
            <person name="Habbig B."/>
            <person name="Hand N.J."/>
            <person name="Hani J."/>
            <person name="Hattenhorst U."/>
            <person name="Hebling U."/>
            <person name="Hernando Y."/>
            <person name="Herrero E."/>
            <person name="Heumann K."/>
            <person name="Hiesel R."/>
            <person name="Hilger F."/>
            <person name="Hofmann B."/>
            <person name="Hollenberg C.P."/>
            <person name="Hughes B."/>
            <person name="Jauniaux J.-C."/>
            <person name="Kalogeropoulos A."/>
            <person name="Katsoulou C."/>
            <person name="Kordes E."/>
            <person name="Lafuente M.J."/>
            <person name="Landt O."/>
            <person name="Louis E.J."/>
            <person name="Maarse A.C."/>
            <person name="Madania A."/>
            <person name="Mannhaupt G."/>
            <person name="Marck C."/>
            <person name="Martin R.P."/>
            <person name="Mewes H.-W."/>
            <person name="Michaux G."/>
            <person name="Paces V."/>
            <person name="Parle-McDermott A.G."/>
            <person name="Pearson B.M."/>
            <person name="Perrin A."/>
            <person name="Pettersson B."/>
            <person name="Poch O."/>
            <person name="Pohl T.M."/>
            <person name="Poirey R."/>
            <person name="Portetelle D."/>
            <person name="Pujol A."/>
            <person name="Purnelle B."/>
            <person name="Ramezani Rad M."/>
            <person name="Rechmann S."/>
            <person name="Schwager C."/>
            <person name="Schweizer M."/>
            <person name="Sor F."/>
            <person name="Sterky F."/>
            <person name="Tarassov I.A."/>
            <person name="Teodoru C."/>
            <person name="Tettelin H."/>
            <person name="Thierry A."/>
            <person name="Tobiasch E."/>
            <person name="Tzermia M."/>
            <person name="Uhlen M."/>
            <person name="Unseld M."/>
            <person name="Valens M."/>
            <person name="Vandenbol M."/>
            <person name="Vetter I."/>
            <person name="Vlcek C."/>
            <person name="Voet M."/>
            <person name="Volckaert G."/>
            <person name="Voss H."/>
            <person name="Wambutt R."/>
            <person name="Wedler H."/>
            <person name="Wiemann S."/>
            <person name="Winsor B."/>
            <person name="Wolfe K.H."/>
            <person name="Zollner A."/>
            <person name="Zumstein E."/>
            <person name="Kleine K."/>
        </authorList>
    </citation>
    <scope>NUCLEOTIDE SEQUENCE [LARGE SCALE GENOMIC DNA]</scope>
    <source>
        <strain>ATCC 204508 / S288c</strain>
    </source>
</reference>
<reference key="3">
    <citation type="journal article" date="2014" name="G3 (Bethesda)">
        <title>The reference genome sequence of Saccharomyces cerevisiae: Then and now.</title>
        <authorList>
            <person name="Engel S.R."/>
            <person name="Dietrich F.S."/>
            <person name="Fisk D.G."/>
            <person name="Binkley G."/>
            <person name="Balakrishnan R."/>
            <person name="Costanzo M.C."/>
            <person name="Dwight S.S."/>
            <person name="Hitz B.C."/>
            <person name="Karra K."/>
            <person name="Nash R.S."/>
            <person name="Weng S."/>
            <person name="Wong E.D."/>
            <person name="Lloyd P."/>
            <person name="Skrzypek M.S."/>
            <person name="Miyasato S.R."/>
            <person name="Simison M."/>
            <person name="Cherry J.M."/>
        </authorList>
    </citation>
    <scope>GENOME REANNOTATION</scope>
    <source>
        <strain>ATCC 204508 / S288c</strain>
    </source>
</reference>
<dbReference type="EMBL" id="X90565">
    <property type="protein sequence ID" value="CAA62183.1"/>
    <property type="molecule type" value="Genomic_DNA"/>
</dbReference>
<dbReference type="EMBL" id="Z75232">
    <property type="protein sequence ID" value="CAA99645.1"/>
    <property type="molecule type" value="Genomic_DNA"/>
</dbReference>
<dbReference type="PIR" id="S58338">
    <property type="entry name" value="S58338"/>
</dbReference>
<dbReference type="DIP" id="DIP-4064N"/>
<dbReference type="IntAct" id="Q12261">
    <property type="interactions" value="1"/>
</dbReference>
<dbReference type="PaxDb" id="4932-YOR325W"/>
<dbReference type="EnsemblFungi" id="YOR325W_mRNA">
    <property type="protein sequence ID" value="YOR325W"/>
    <property type="gene ID" value="YOR325W"/>
</dbReference>
<dbReference type="AGR" id="SGD:S000005852"/>
<dbReference type="SGD" id="S000005852">
    <property type="gene designation" value="YOR325W"/>
</dbReference>
<dbReference type="HOGENOM" id="CLU_1679329_0_0_1"/>
<organism>
    <name type="scientific">Saccharomyces cerevisiae (strain ATCC 204508 / S288c)</name>
    <name type="common">Baker's yeast</name>
    <dbReference type="NCBI Taxonomy" id="559292"/>
    <lineage>
        <taxon>Eukaryota</taxon>
        <taxon>Fungi</taxon>
        <taxon>Dikarya</taxon>
        <taxon>Ascomycota</taxon>
        <taxon>Saccharomycotina</taxon>
        <taxon>Saccharomycetes</taxon>
        <taxon>Saccharomycetales</taxon>
        <taxon>Saccharomycetaceae</taxon>
        <taxon>Saccharomyces</taxon>
    </lineage>
</organism>
<proteinExistence type="uncertain"/>
<feature type="chain" id="PRO_0000299737" description="Putative uncharacterized protein YOR325W">
    <location>
        <begin position="1"/>
        <end position="157"/>
    </location>
</feature>